<evidence type="ECO:0000255" key="1">
    <source>
        <dbReference type="HAMAP-Rule" id="MF_00791"/>
    </source>
</evidence>
<keyword id="KW-1185">Reference proteome</keyword>
<proteinExistence type="inferred from homology"/>
<gene>
    <name evidence="1" type="primary">apaG</name>
    <name type="ordered locus">BCAN_A0310</name>
</gene>
<name>APAG_BRUC2</name>
<organism>
    <name type="scientific">Brucella canis (strain ATCC 23365 / NCTC 10854 / RM-666)</name>
    <dbReference type="NCBI Taxonomy" id="483179"/>
    <lineage>
        <taxon>Bacteria</taxon>
        <taxon>Pseudomonadati</taxon>
        <taxon>Pseudomonadota</taxon>
        <taxon>Alphaproteobacteria</taxon>
        <taxon>Hyphomicrobiales</taxon>
        <taxon>Brucellaceae</taxon>
        <taxon>Brucella/Ochrobactrum group</taxon>
        <taxon>Brucella</taxon>
    </lineage>
</organism>
<dbReference type="EMBL" id="CP000872">
    <property type="protein sequence ID" value="ABX61401.1"/>
    <property type="molecule type" value="Genomic_DNA"/>
</dbReference>
<dbReference type="RefSeq" id="WP_004689461.1">
    <property type="nucleotide sequence ID" value="NC_010103.1"/>
</dbReference>
<dbReference type="SMR" id="A9M7Z1"/>
<dbReference type="GeneID" id="97534304"/>
<dbReference type="KEGG" id="bcs:BCAN_A0310"/>
<dbReference type="HOGENOM" id="CLU_128074_1_0_5"/>
<dbReference type="PhylomeDB" id="A9M7Z1"/>
<dbReference type="Proteomes" id="UP000001385">
    <property type="component" value="Chromosome I"/>
</dbReference>
<dbReference type="GO" id="GO:0070987">
    <property type="term" value="P:error-free translesion synthesis"/>
    <property type="evidence" value="ECO:0007669"/>
    <property type="project" value="TreeGrafter"/>
</dbReference>
<dbReference type="Gene3D" id="2.60.40.1470">
    <property type="entry name" value="ApaG domain"/>
    <property type="match status" value="1"/>
</dbReference>
<dbReference type="HAMAP" id="MF_00791">
    <property type="entry name" value="ApaG"/>
    <property type="match status" value="1"/>
</dbReference>
<dbReference type="InterPro" id="IPR007474">
    <property type="entry name" value="ApaG_domain"/>
</dbReference>
<dbReference type="InterPro" id="IPR036767">
    <property type="entry name" value="ApaG_sf"/>
</dbReference>
<dbReference type="InterPro" id="IPR023065">
    <property type="entry name" value="Uncharacterised_ApaG"/>
</dbReference>
<dbReference type="NCBIfam" id="NF003967">
    <property type="entry name" value="PRK05461.1"/>
    <property type="match status" value="1"/>
</dbReference>
<dbReference type="PANTHER" id="PTHR14289">
    <property type="entry name" value="F-BOX ONLY PROTEIN 3"/>
    <property type="match status" value="1"/>
</dbReference>
<dbReference type="PANTHER" id="PTHR14289:SF16">
    <property type="entry name" value="POLYMERASE DELTA-INTERACTING PROTEIN 2"/>
    <property type="match status" value="1"/>
</dbReference>
<dbReference type="Pfam" id="PF04379">
    <property type="entry name" value="DUF525"/>
    <property type="match status" value="1"/>
</dbReference>
<dbReference type="SUPFAM" id="SSF110069">
    <property type="entry name" value="ApaG-like"/>
    <property type="match status" value="1"/>
</dbReference>
<dbReference type="PROSITE" id="PS51087">
    <property type="entry name" value="APAG"/>
    <property type="match status" value="1"/>
</dbReference>
<sequence>MYSAVTRGIEVTVEPFYLEVQSEPEENRYVWGYRVTIVNNSSETVQLCSRYWQITDANGHVQEVRGSGVVGEQPVLDPGDSYQYSSGCPLTTSSGVMVGRYQMKGEDGAQFEIEIPAFSLDVPEQRRTLN</sequence>
<feature type="chain" id="PRO_1000083611" description="Protein ApaG">
    <location>
        <begin position="1"/>
        <end position="130"/>
    </location>
</feature>
<feature type="domain" description="ApaG" evidence="1">
    <location>
        <begin position="3"/>
        <end position="127"/>
    </location>
</feature>
<accession>A9M7Z1</accession>
<reference key="1">
    <citation type="submission" date="2007-10" db="EMBL/GenBank/DDBJ databases">
        <title>Brucella canis ATCC 23365 whole genome shotgun sequencing project.</title>
        <authorList>
            <person name="Setubal J.C."/>
            <person name="Bowns C."/>
            <person name="Boyle S."/>
            <person name="Crasta O.R."/>
            <person name="Czar M.J."/>
            <person name="Dharmanolla C."/>
            <person name="Gillespie J.J."/>
            <person name="Kenyon R.W."/>
            <person name="Lu J."/>
            <person name="Mane S."/>
            <person name="Mohapatra S."/>
            <person name="Nagrani S."/>
            <person name="Purkayastha A."/>
            <person name="Rajasimha H.K."/>
            <person name="Shallom J.M."/>
            <person name="Shallom S."/>
            <person name="Shukla M."/>
            <person name="Snyder E.E."/>
            <person name="Sobral B.W."/>
            <person name="Wattam A.R."/>
            <person name="Will R."/>
            <person name="Williams K."/>
            <person name="Yoo H."/>
            <person name="Bruce D."/>
            <person name="Detter C."/>
            <person name="Munk C."/>
            <person name="Brettin T.S."/>
        </authorList>
    </citation>
    <scope>NUCLEOTIDE SEQUENCE [LARGE SCALE GENOMIC DNA]</scope>
    <source>
        <strain>ATCC 23365 / NCTC 10854 / RM-666</strain>
    </source>
</reference>
<protein>
    <recommendedName>
        <fullName evidence="1">Protein ApaG</fullName>
    </recommendedName>
</protein>